<keyword id="KW-0963">Cytoplasm</keyword>
<keyword id="KW-0448">Lipopolysaccharide biosynthesis</keyword>
<keyword id="KW-0808">Transferase</keyword>
<feature type="chain" id="PRO_0000304476" description="2-dehydro-3-deoxyphosphooctonate aldolase">
    <location>
        <begin position="1"/>
        <end position="281"/>
    </location>
</feature>
<gene>
    <name evidence="1" type="primary">kdsA</name>
    <name type="ordered locus">Psyr_1362</name>
</gene>
<comment type="catalytic activity">
    <reaction evidence="1">
        <text>D-arabinose 5-phosphate + phosphoenolpyruvate + H2O = 3-deoxy-alpha-D-manno-2-octulosonate-8-phosphate + phosphate</text>
        <dbReference type="Rhea" id="RHEA:14053"/>
        <dbReference type="ChEBI" id="CHEBI:15377"/>
        <dbReference type="ChEBI" id="CHEBI:43474"/>
        <dbReference type="ChEBI" id="CHEBI:57693"/>
        <dbReference type="ChEBI" id="CHEBI:58702"/>
        <dbReference type="ChEBI" id="CHEBI:85985"/>
        <dbReference type="EC" id="2.5.1.55"/>
    </reaction>
</comment>
<comment type="pathway">
    <text evidence="1">Carbohydrate biosynthesis; 3-deoxy-D-manno-octulosonate biosynthesis; 3-deoxy-D-manno-octulosonate from D-ribulose 5-phosphate: step 2/3.</text>
</comment>
<comment type="pathway">
    <text evidence="1">Bacterial outer membrane biogenesis; lipopolysaccharide biosynthesis.</text>
</comment>
<comment type="subcellular location">
    <subcellularLocation>
        <location evidence="1">Cytoplasm</location>
    </subcellularLocation>
</comment>
<comment type="similarity">
    <text evidence="1">Belongs to the KdsA family.</text>
</comment>
<sequence>MAQKIIRVGSIEVANDKPMVLFGGMNVLESRDMAMQVCEEYVKVTEKLGIPYVFKASFDKANRSSVNSYRGPGLEEGMRIFEEIKRTFNVPLITDVHEPHQAAVVAEVCDIIQLPAFLSRQTDLVVAMAKTGAIINIKKAQFLAPQEMKHILTKCEEAGNDQLILCERGSSFGYNNLVVDMLGFGIMKQFEYPILFDVTHALQMPGGRSDSAGGRRAQVLDLAKAGISQNLAGLFLEAHPDPDNAKCDGPCALRLDKLEPFLAQLKSLDELVKSFPIVETA</sequence>
<organism>
    <name type="scientific">Pseudomonas syringae pv. syringae (strain B728a)</name>
    <dbReference type="NCBI Taxonomy" id="205918"/>
    <lineage>
        <taxon>Bacteria</taxon>
        <taxon>Pseudomonadati</taxon>
        <taxon>Pseudomonadota</taxon>
        <taxon>Gammaproteobacteria</taxon>
        <taxon>Pseudomonadales</taxon>
        <taxon>Pseudomonadaceae</taxon>
        <taxon>Pseudomonas</taxon>
        <taxon>Pseudomonas syringae</taxon>
    </lineage>
</organism>
<proteinExistence type="inferred from homology"/>
<evidence type="ECO:0000255" key="1">
    <source>
        <dbReference type="HAMAP-Rule" id="MF_00056"/>
    </source>
</evidence>
<reference key="1">
    <citation type="journal article" date="2005" name="Proc. Natl. Acad. Sci. U.S.A.">
        <title>Comparison of the complete genome sequences of Pseudomonas syringae pv. syringae B728a and pv. tomato DC3000.</title>
        <authorList>
            <person name="Feil H."/>
            <person name="Feil W.S."/>
            <person name="Chain P."/>
            <person name="Larimer F."/>
            <person name="Dibartolo G."/>
            <person name="Copeland A."/>
            <person name="Lykidis A."/>
            <person name="Trong S."/>
            <person name="Nolan M."/>
            <person name="Goltsman E."/>
            <person name="Thiel J."/>
            <person name="Malfatti S."/>
            <person name="Loper J.E."/>
            <person name="Lapidus A."/>
            <person name="Detter J.C."/>
            <person name="Land M."/>
            <person name="Richardson P.M."/>
            <person name="Kyrpides N.C."/>
            <person name="Ivanova N."/>
            <person name="Lindow S.E."/>
        </authorList>
    </citation>
    <scope>NUCLEOTIDE SEQUENCE [LARGE SCALE GENOMIC DNA]</scope>
    <source>
        <strain>B728a</strain>
    </source>
</reference>
<name>KDSA_PSEU2</name>
<protein>
    <recommendedName>
        <fullName evidence="1">2-dehydro-3-deoxyphosphooctonate aldolase</fullName>
        <ecNumber evidence="1">2.5.1.55</ecNumber>
    </recommendedName>
    <alternativeName>
        <fullName evidence="1">3-deoxy-D-manno-octulosonic acid 8-phosphate synthase</fullName>
    </alternativeName>
    <alternativeName>
        <fullName evidence="1">KDO-8-phosphate synthase</fullName>
        <shortName evidence="1">KDO 8-P synthase</shortName>
        <shortName evidence="1">KDOPS</shortName>
    </alternativeName>
    <alternativeName>
        <fullName evidence="1">Phospho-2-dehydro-3-deoxyoctonate aldolase</fullName>
    </alternativeName>
</protein>
<accession>Q4ZWQ9</accession>
<dbReference type="EC" id="2.5.1.55" evidence="1"/>
<dbReference type="EMBL" id="CP000075">
    <property type="protein sequence ID" value="AAY36413.1"/>
    <property type="molecule type" value="Genomic_DNA"/>
</dbReference>
<dbReference type="RefSeq" id="WP_011266982.1">
    <property type="nucleotide sequence ID" value="NC_007005.1"/>
</dbReference>
<dbReference type="RefSeq" id="YP_234451.1">
    <property type="nucleotide sequence ID" value="NC_007005.1"/>
</dbReference>
<dbReference type="SMR" id="Q4ZWQ9"/>
<dbReference type="STRING" id="205918.Psyr_1362"/>
<dbReference type="KEGG" id="psb:Psyr_1362"/>
<dbReference type="PATRIC" id="fig|205918.7.peg.1395"/>
<dbReference type="eggNOG" id="COG2877">
    <property type="taxonomic scope" value="Bacteria"/>
</dbReference>
<dbReference type="HOGENOM" id="CLU_036666_0_0_6"/>
<dbReference type="OrthoDB" id="9776934at2"/>
<dbReference type="UniPathway" id="UPA00030"/>
<dbReference type="UniPathway" id="UPA00357">
    <property type="reaction ID" value="UER00474"/>
</dbReference>
<dbReference type="Proteomes" id="UP000000426">
    <property type="component" value="Chromosome"/>
</dbReference>
<dbReference type="GO" id="GO:0005737">
    <property type="term" value="C:cytoplasm"/>
    <property type="evidence" value="ECO:0007669"/>
    <property type="project" value="UniProtKB-SubCell"/>
</dbReference>
<dbReference type="GO" id="GO:0008676">
    <property type="term" value="F:3-deoxy-8-phosphooctulonate synthase activity"/>
    <property type="evidence" value="ECO:0007669"/>
    <property type="project" value="UniProtKB-UniRule"/>
</dbReference>
<dbReference type="GO" id="GO:0019294">
    <property type="term" value="P:keto-3-deoxy-D-manno-octulosonic acid biosynthetic process"/>
    <property type="evidence" value="ECO:0007669"/>
    <property type="project" value="UniProtKB-UniRule"/>
</dbReference>
<dbReference type="Gene3D" id="3.20.20.70">
    <property type="entry name" value="Aldolase class I"/>
    <property type="match status" value="1"/>
</dbReference>
<dbReference type="HAMAP" id="MF_00056">
    <property type="entry name" value="KDO8P_synth"/>
    <property type="match status" value="1"/>
</dbReference>
<dbReference type="InterPro" id="IPR013785">
    <property type="entry name" value="Aldolase_TIM"/>
</dbReference>
<dbReference type="InterPro" id="IPR006218">
    <property type="entry name" value="DAHP1/KDSA"/>
</dbReference>
<dbReference type="InterPro" id="IPR006269">
    <property type="entry name" value="KDO8P_synthase"/>
</dbReference>
<dbReference type="NCBIfam" id="TIGR01362">
    <property type="entry name" value="KDO8P_synth"/>
    <property type="match status" value="1"/>
</dbReference>
<dbReference type="NCBIfam" id="NF003543">
    <property type="entry name" value="PRK05198.1"/>
    <property type="match status" value="1"/>
</dbReference>
<dbReference type="NCBIfam" id="NF009109">
    <property type="entry name" value="PRK12457.1"/>
    <property type="match status" value="1"/>
</dbReference>
<dbReference type="PANTHER" id="PTHR21057">
    <property type="entry name" value="PHOSPHO-2-DEHYDRO-3-DEOXYHEPTONATE ALDOLASE"/>
    <property type="match status" value="1"/>
</dbReference>
<dbReference type="Pfam" id="PF00793">
    <property type="entry name" value="DAHP_synth_1"/>
    <property type="match status" value="1"/>
</dbReference>
<dbReference type="SUPFAM" id="SSF51569">
    <property type="entry name" value="Aldolase"/>
    <property type="match status" value="1"/>
</dbReference>